<sequence>MTYNIVALPGDGIGPEILNGSLSLLEIISNKYNFNYQIEHHEFGGASIDTFGEPLTEKTLNACKRADAILLGAIGGPKWTDPNNRPEQGLLKLRKSLNLFANIRPTTVVKGASSLSPLKEERVEGKDLVIVRELTSGIYFGEPRHFNNHEALDSLTYTREEIERIVHVAFKLAASRRGKLTSVDKENVLASSKLWRKVVNEVSQLYPEVTVNHLLVDACSMHLITNPKQFDVIVCENLFGDILSDEASVIPGSLGLSPSASFSNDGPRLYEPIHGSAPDIAGKNVANPFGMILSLAMCLRESLNQPDAADELEQHIYNMIEHGQTTADLGGKLNTTDIFEILSQKLNH</sequence>
<comment type="function">
    <text evidence="1">Catalyzes the oxidation of 3-carboxy-2-hydroxy-4-methylpentanoate (3-isopropylmalate) to 3-carboxy-4-methyl-2-oxopentanoate. The product decarboxylates to 4-methyl-2 oxopentanoate.</text>
</comment>
<comment type="catalytic activity">
    <reaction evidence="1">
        <text>(2R,3S)-3-isopropylmalate + NAD(+) = 4-methyl-2-oxopentanoate + CO2 + NADH</text>
        <dbReference type="Rhea" id="RHEA:32271"/>
        <dbReference type="ChEBI" id="CHEBI:16526"/>
        <dbReference type="ChEBI" id="CHEBI:17865"/>
        <dbReference type="ChEBI" id="CHEBI:35121"/>
        <dbReference type="ChEBI" id="CHEBI:57540"/>
        <dbReference type="ChEBI" id="CHEBI:57945"/>
        <dbReference type="EC" id="1.1.1.85"/>
    </reaction>
</comment>
<comment type="cofactor">
    <cofactor evidence="1">
        <name>Mg(2+)</name>
        <dbReference type="ChEBI" id="CHEBI:18420"/>
    </cofactor>
    <cofactor evidence="1">
        <name>Mn(2+)</name>
        <dbReference type="ChEBI" id="CHEBI:29035"/>
    </cofactor>
    <text evidence="1">Binds 1 Mg(2+) or Mn(2+) ion per subunit.</text>
</comment>
<comment type="pathway">
    <text evidence="1">Amino-acid biosynthesis; L-leucine biosynthesis; L-leucine from 3-methyl-2-oxobutanoate: step 3/4.</text>
</comment>
<comment type="subunit">
    <text evidence="1">Homodimer.</text>
</comment>
<comment type="subcellular location">
    <subcellularLocation>
        <location evidence="1">Cytoplasm</location>
    </subcellularLocation>
</comment>
<comment type="similarity">
    <text evidence="1">Belongs to the isocitrate and isopropylmalate dehydrogenases family. LeuB type 1 subfamily.</text>
</comment>
<accession>Q8NVJ0</accession>
<dbReference type="EC" id="1.1.1.85" evidence="1"/>
<dbReference type="EMBL" id="BA000033">
    <property type="protein sequence ID" value="BAB95847.1"/>
    <property type="molecule type" value="Genomic_DNA"/>
</dbReference>
<dbReference type="RefSeq" id="WP_000221941.1">
    <property type="nucleotide sequence ID" value="NC_003923.1"/>
</dbReference>
<dbReference type="SMR" id="Q8NVJ0"/>
<dbReference type="KEGG" id="sam:MW1982"/>
<dbReference type="HOGENOM" id="CLU_031953_0_3_9"/>
<dbReference type="UniPathway" id="UPA00048">
    <property type="reaction ID" value="UER00072"/>
</dbReference>
<dbReference type="GO" id="GO:0005829">
    <property type="term" value="C:cytosol"/>
    <property type="evidence" value="ECO:0007669"/>
    <property type="project" value="TreeGrafter"/>
</dbReference>
<dbReference type="GO" id="GO:0003862">
    <property type="term" value="F:3-isopropylmalate dehydrogenase activity"/>
    <property type="evidence" value="ECO:0007669"/>
    <property type="project" value="UniProtKB-UniRule"/>
</dbReference>
<dbReference type="GO" id="GO:0000287">
    <property type="term" value="F:magnesium ion binding"/>
    <property type="evidence" value="ECO:0007669"/>
    <property type="project" value="InterPro"/>
</dbReference>
<dbReference type="GO" id="GO:0051287">
    <property type="term" value="F:NAD binding"/>
    <property type="evidence" value="ECO:0007669"/>
    <property type="project" value="InterPro"/>
</dbReference>
<dbReference type="GO" id="GO:0009098">
    <property type="term" value="P:L-leucine biosynthetic process"/>
    <property type="evidence" value="ECO:0007669"/>
    <property type="project" value="UniProtKB-UniRule"/>
</dbReference>
<dbReference type="FunFam" id="3.40.718.10:FF:000006">
    <property type="entry name" value="3-isopropylmalate dehydrogenase"/>
    <property type="match status" value="1"/>
</dbReference>
<dbReference type="Gene3D" id="3.40.718.10">
    <property type="entry name" value="Isopropylmalate Dehydrogenase"/>
    <property type="match status" value="1"/>
</dbReference>
<dbReference type="HAMAP" id="MF_01033">
    <property type="entry name" value="LeuB_type1"/>
    <property type="match status" value="1"/>
</dbReference>
<dbReference type="InterPro" id="IPR019818">
    <property type="entry name" value="IsoCit/isopropylmalate_DH_CS"/>
</dbReference>
<dbReference type="InterPro" id="IPR024084">
    <property type="entry name" value="IsoPropMal-DH-like_dom"/>
</dbReference>
<dbReference type="InterPro" id="IPR004429">
    <property type="entry name" value="Isopropylmalate_DH"/>
</dbReference>
<dbReference type="NCBIfam" id="TIGR00169">
    <property type="entry name" value="leuB"/>
    <property type="match status" value="1"/>
</dbReference>
<dbReference type="PANTHER" id="PTHR42979">
    <property type="entry name" value="3-ISOPROPYLMALATE DEHYDROGENASE"/>
    <property type="match status" value="1"/>
</dbReference>
<dbReference type="PANTHER" id="PTHR42979:SF1">
    <property type="entry name" value="3-ISOPROPYLMALATE DEHYDROGENASE"/>
    <property type="match status" value="1"/>
</dbReference>
<dbReference type="Pfam" id="PF00180">
    <property type="entry name" value="Iso_dh"/>
    <property type="match status" value="1"/>
</dbReference>
<dbReference type="SMART" id="SM01329">
    <property type="entry name" value="Iso_dh"/>
    <property type="match status" value="1"/>
</dbReference>
<dbReference type="SUPFAM" id="SSF53659">
    <property type="entry name" value="Isocitrate/Isopropylmalate dehydrogenase-like"/>
    <property type="match status" value="1"/>
</dbReference>
<dbReference type="PROSITE" id="PS00470">
    <property type="entry name" value="IDH_IMDH"/>
    <property type="match status" value="1"/>
</dbReference>
<protein>
    <recommendedName>
        <fullName evidence="1">3-isopropylmalate dehydrogenase</fullName>
        <ecNumber evidence="1">1.1.1.85</ecNumber>
    </recommendedName>
    <alternativeName>
        <fullName evidence="1">3-IPM-DH</fullName>
    </alternativeName>
    <alternativeName>
        <fullName evidence="1">Beta-IPM dehydrogenase</fullName>
        <shortName evidence="1">IMDH</shortName>
    </alternativeName>
</protein>
<proteinExistence type="inferred from homology"/>
<name>LEU3_STAAW</name>
<gene>
    <name evidence="1" type="primary">leuB</name>
    <name type="ordered locus">MW1982</name>
</gene>
<reference key="1">
    <citation type="journal article" date="2002" name="Lancet">
        <title>Genome and virulence determinants of high virulence community-acquired MRSA.</title>
        <authorList>
            <person name="Baba T."/>
            <person name="Takeuchi F."/>
            <person name="Kuroda M."/>
            <person name="Yuzawa H."/>
            <person name="Aoki K."/>
            <person name="Oguchi A."/>
            <person name="Nagai Y."/>
            <person name="Iwama N."/>
            <person name="Asano K."/>
            <person name="Naimi T."/>
            <person name="Kuroda H."/>
            <person name="Cui L."/>
            <person name="Yamamoto K."/>
            <person name="Hiramatsu K."/>
        </authorList>
    </citation>
    <scope>NUCLEOTIDE SEQUENCE [LARGE SCALE GENOMIC DNA]</scope>
    <source>
        <strain>MW2</strain>
    </source>
</reference>
<evidence type="ECO:0000255" key="1">
    <source>
        <dbReference type="HAMAP-Rule" id="MF_01033"/>
    </source>
</evidence>
<organism>
    <name type="scientific">Staphylococcus aureus (strain MW2)</name>
    <dbReference type="NCBI Taxonomy" id="196620"/>
    <lineage>
        <taxon>Bacteria</taxon>
        <taxon>Bacillati</taxon>
        <taxon>Bacillota</taxon>
        <taxon>Bacilli</taxon>
        <taxon>Bacillales</taxon>
        <taxon>Staphylococcaceae</taxon>
        <taxon>Staphylococcus</taxon>
    </lineage>
</organism>
<keyword id="KW-0028">Amino-acid biosynthesis</keyword>
<keyword id="KW-0100">Branched-chain amino acid biosynthesis</keyword>
<keyword id="KW-0963">Cytoplasm</keyword>
<keyword id="KW-0432">Leucine biosynthesis</keyword>
<keyword id="KW-0460">Magnesium</keyword>
<keyword id="KW-0464">Manganese</keyword>
<keyword id="KW-0479">Metal-binding</keyword>
<keyword id="KW-0520">NAD</keyword>
<keyword id="KW-0560">Oxidoreductase</keyword>
<feature type="chain" id="PRO_0000083755" description="3-isopropylmalate dehydrogenase">
    <location>
        <begin position="1"/>
        <end position="348"/>
    </location>
</feature>
<feature type="binding site" evidence="1">
    <location>
        <begin position="76"/>
        <end position="87"/>
    </location>
    <ligand>
        <name>NAD(+)</name>
        <dbReference type="ChEBI" id="CHEBI:57540"/>
    </ligand>
</feature>
<feature type="binding site" evidence="1">
    <location>
        <position position="94"/>
    </location>
    <ligand>
        <name>substrate</name>
    </ligand>
</feature>
<feature type="binding site" evidence="1">
    <location>
        <position position="104"/>
    </location>
    <ligand>
        <name>substrate</name>
    </ligand>
</feature>
<feature type="binding site" evidence="1">
    <location>
        <position position="132"/>
    </location>
    <ligand>
        <name>substrate</name>
    </ligand>
</feature>
<feature type="binding site" evidence="1">
    <location>
        <position position="217"/>
    </location>
    <ligand>
        <name>Mg(2+)</name>
        <dbReference type="ChEBI" id="CHEBI:18420"/>
    </ligand>
</feature>
<feature type="binding site" evidence="1">
    <location>
        <position position="217"/>
    </location>
    <ligand>
        <name>substrate</name>
    </ligand>
</feature>
<feature type="binding site" evidence="1">
    <location>
        <position position="241"/>
    </location>
    <ligand>
        <name>Mg(2+)</name>
        <dbReference type="ChEBI" id="CHEBI:18420"/>
    </ligand>
</feature>
<feature type="binding site" evidence="1">
    <location>
        <position position="245"/>
    </location>
    <ligand>
        <name>Mg(2+)</name>
        <dbReference type="ChEBI" id="CHEBI:18420"/>
    </ligand>
</feature>
<feature type="binding site" evidence="1">
    <location>
        <begin position="275"/>
        <end position="287"/>
    </location>
    <ligand>
        <name>NAD(+)</name>
        <dbReference type="ChEBI" id="CHEBI:57540"/>
    </ligand>
</feature>
<feature type="site" description="Important for catalysis" evidence="1">
    <location>
        <position position="139"/>
    </location>
</feature>
<feature type="site" description="Important for catalysis" evidence="1">
    <location>
        <position position="185"/>
    </location>
</feature>